<sequence>MKKIEAWLSKKGLKNKRTLIVVIAFVLFIIFLFLLLNSNSEDSGNITITENAELRTGPNAAYPVIYKVEKGDHFKKIGKVGKWIEVEDTSSNEKGWIAGWHTNLDIVADNTKEKNPLQGKTIVLDPGHGGSDQGASSNTKYKSLEKDYTLKTAKELQRTLEKEGATVKMTRTDDTYVSLENRDIKGDAYLSIHNDALESSNANGMTVYWYHDNQRALADTLDATIQKKGLLSNRGSRQENYQVLRQTKVPAVLLELGYISNPTDETMIKDQLHRQILEQAIVDGLKIYFSA</sequence>
<keyword id="KW-0961">Cell wall biogenesis/degradation</keyword>
<keyword id="KW-0378">Hydrolase</keyword>
<keyword id="KW-0964">Secreted</keyword>
<keyword id="KW-0732">Signal</keyword>
<gene>
    <name type="primary">lytH</name>
    <name type="ordered locus">SAB1501c</name>
</gene>
<reference key="1">
    <citation type="journal article" date="2007" name="PLoS ONE">
        <title>Molecular correlates of host specialization in Staphylococcus aureus.</title>
        <authorList>
            <person name="Herron-Olson L."/>
            <person name="Fitzgerald J.R."/>
            <person name="Musser J.M."/>
            <person name="Kapur V."/>
        </authorList>
    </citation>
    <scope>NUCLEOTIDE SEQUENCE [LARGE SCALE GENOMIC DNA]</scope>
    <source>
        <strain>bovine RF122 / ET3-1</strain>
    </source>
</reference>
<protein>
    <recommendedName>
        <fullName>Probable cell wall amidase LytH</fullName>
        <ecNumber>3.5.1.-</ecNumber>
    </recommendedName>
</protein>
<comment type="function">
    <text evidence="1">Probably involved in cell-wall metabolism.</text>
</comment>
<comment type="subcellular location">
    <subcellularLocation>
        <location evidence="5">Secreted</location>
    </subcellularLocation>
</comment>
<comment type="similarity">
    <text evidence="5">Belongs to the N-acetylmuramoyl-L-alanine amidase 3 family.</text>
</comment>
<evidence type="ECO:0000250" key="1"/>
<evidence type="ECO:0000255" key="2"/>
<evidence type="ECO:0000255" key="3">
    <source>
        <dbReference type="PROSITE-ProRule" id="PRU01117"/>
    </source>
</evidence>
<evidence type="ECO:0000256" key="4">
    <source>
        <dbReference type="SAM" id="MobiDB-lite"/>
    </source>
</evidence>
<evidence type="ECO:0000305" key="5"/>
<accession>Q2YT98</accession>
<feature type="signal peptide" evidence="2">
    <location>
        <begin position="1"/>
        <end position="40"/>
    </location>
</feature>
<feature type="chain" id="PRO_0000245425" description="Probable cell wall amidase LytH">
    <location>
        <begin position="41"/>
        <end position="291"/>
    </location>
</feature>
<feature type="domain" description="SH3b" evidence="3">
    <location>
        <begin position="41"/>
        <end position="105"/>
    </location>
</feature>
<feature type="domain" description="MurNAc-LAA" evidence="2">
    <location>
        <begin position="122"/>
        <end position="286"/>
    </location>
</feature>
<feature type="region of interest" description="Disordered" evidence="4">
    <location>
        <begin position="118"/>
        <end position="140"/>
    </location>
</feature>
<proteinExistence type="inferred from homology"/>
<organism>
    <name type="scientific">Staphylococcus aureus (strain bovine RF122 / ET3-1)</name>
    <dbReference type="NCBI Taxonomy" id="273036"/>
    <lineage>
        <taxon>Bacteria</taxon>
        <taxon>Bacillati</taxon>
        <taxon>Bacillota</taxon>
        <taxon>Bacilli</taxon>
        <taxon>Bacillales</taxon>
        <taxon>Staphylococcaceae</taxon>
        <taxon>Staphylococcus</taxon>
    </lineage>
</organism>
<name>LYTH_STAAB</name>
<dbReference type="EC" id="3.5.1.-"/>
<dbReference type="EMBL" id="AJ938182">
    <property type="protein sequence ID" value="CAI81190.1"/>
    <property type="molecule type" value="Genomic_DNA"/>
</dbReference>
<dbReference type="RefSeq" id="WP_000717800.1">
    <property type="nucleotide sequence ID" value="NC_007622.1"/>
</dbReference>
<dbReference type="SMR" id="Q2YT98"/>
<dbReference type="KEGG" id="sab:SAB1501c"/>
<dbReference type="HOGENOM" id="CLU_014322_1_1_9"/>
<dbReference type="GO" id="GO:0005576">
    <property type="term" value="C:extracellular region"/>
    <property type="evidence" value="ECO:0007669"/>
    <property type="project" value="UniProtKB-SubCell"/>
</dbReference>
<dbReference type="GO" id="GO:0030288">
    <property type="term" value="C:outer membrane-bounded periplasmic space"/>
    <property type="evidence" value="ECO:0007669"/>
    <property type="project" value="TreeGrafter"/>
</dbReference>
<dbReference type="GO" id="GO:0008745">
    <property type="term" value="F:N-acetylmuramoyl-L-alanine amidase activity"/>
    <property type="evidence" value="ECO:0007669"/>
    <property type="project" value="InterPro"/>
</dbReference>
<dbReference type="GO" id="GO:0071555">
    <property type="term" value="P:cell wall organization"/>
    <property type="evidence" value="ECO:0007669"/>
    <property type="project" value="UniProtKB-KW"/>
</dbReference>
<dbReference type="GO" id="GO:0009253">
    <property type="term" value="P:peptidoglycan catabolic process"/>
    <property type="evidence" value="ECO:0007669"/>
    <property type="project" value="InterPro"/>
</dbReference>
<dbReference type="CDD" id="cd02696">
    <property type="entry name" value="MurNAc-LAA"/>
    <property type="match status" value="1"/>
</dbReference>
<dbReference type="Gene3D" id="2.30.30.40">
    <property type="entry name" value="SH3 Domains"/>
    <property type="match status" value="1"/>
</dbReference>
<dbReference type="Gene3D" id="3.40.630.40">
    <property type="entry name" value="Zn-dependent exopeptidases"/>
    <property type="match status" value="1"/>
</dbReference>
<dbReference type="InterPro" id="IPR017273">
    <property type="entry name" value="LytH"/>
</dbReference>
<dbReference type="InterPro" id="IPR002508">
    <property type="entry name" value="MurNAc-LAA_cat"/>
</dbReference>
<dbReference type="InterPro" id="IPR050695">
    <property type="entry name" value="N-acetylmuramoyl_amidase_3"/>
</dbReference>
<dbReference type="InterPro" id="IPR003646">
    <property type="entry name" value="SH3-like_bac-type"/>
</dbReference>
<dbReference type="PANTHER" id="PTHR30404:SF7">
    <property type="entry name" value="CELL WALL AMIDASE LYTH-RELATED"/>
    <property type="match status" value="1"/>
</dbReference>
<dbReference type="PANTHER" id="PTHR30404">
    <property type="entry name" value="N-ACETYLMURAMOYL-L-ALANINE AMIDASE"/>
    <property type="match status" value="1"/>
</dbReference>
<dbReference type="Pfam" id="PF01520">
    <property type="entry name" value="Amidase_3"/>
    <property type="match status" value="1"/>
</dbReference>
<dbReference type="Pfam" id="PF08239">
    <property type="entry name" value="SH3_3"/>
    <property type="match status" value="1"/>
</dbReference>
<dbReference type="PIRSF" id="PIRSF037730">
    <property type="entry name" value="CWA_LytH_prd"/>
    <property type="match status" value="1"/>
</dbReference>
<dbReference type="SMART" id="SM00646">
    <property type="entry name" value="Ami_3"/>
    <property type="match status" value="1"/>
</dbReference>
<dbReference type="SMART" id="SM00287">
    <property type="entry name" value="SH3b"/>
    <property type="match status" value="1"/>
</dbReference>
<dbReference type="SUPFAM" id="SSF53187">
    <property type="entry name" value="Zn-dependent exopeptidases"/>
    <property type="match status" value="1"/>
</dbReference>
<dbReference type="PROSITE" id="PS51781">
    <property type="entry name" value="SH3B"/>
    <property type="match status" value="1"/>
</dbReference>